<accession>Q8GUI6</accession>
<accession>F4JUW8</accession>
<accession>Q9SUN9</accession>
<sequence>MDQLASLAESVAMEEDSEKQSIKGESSLEPDSTPSSPKITARWNPSEACRPLVDDAPIFYPTNEDFDDPLGYIEKLRSKAESYGICRIVPPVAWRPPCPLKEKKIWENSKFPTRIQFIDLLQNREPIKKSTKTKKRKRRRISKIGYTRRKRDSGCDTASSGSSDSEGKFGFQTGPDFTLEEFQKYDEYFKECYFQSEDHPGSKASENKKFKPKVKDLEGEYWRIVEQATDEVEVYYGADLETKKFGSGFPKYKPGYPISEADQYSQCGWNLNNLSRLPGSVLAFESCDISGVIVPWLYVGMCFSTFCWHVEDHHLYSMNYLHTGDPKVWYGIPGNHAESFENVMKKRLPDLFEEQPDLLHQLVTQLSPRILKEEGVPVYRAVQRSGEFILTFPKAYHSGFNCGFNCAEAVNVAPVDWLVHGQNAVEGYSKQRRKSSLSHDKLLLGAAMEATYCLWELSLSKKKTPVIARWKRVCSEDGLLTKAVKKRVQMEEERLNHLQDGFSLRKMEGDFDNKRERECFLCFYDLHMSASSCKCSPNRFACLIHAKDLCSCESKDRYILIRHTLDELWALVRALEGDLDAIDLWASKCRDQYPSQHPRAREYAYLKSAPCIKSRGSSKVQQREQNNLQLVSERLQSDLTSNKEVQLKQDGDSDVNRHGHESERNHVHGITDKSAVTDVKLGVGGKFDEKKISVESQNPHSVSDVGCSELAKKVDGCLGGKDQNAATNRLSLSVELLSSGSLVVKKLWCSKQAIYPKGFKSRVKFLSVLDPTNLTNYISEVLDAGLLGPLFRVSVEDYPTENFSNVSAEKCWQMVTQRLKLEIIKKCDQPVSSLTSLQPLESINGLEMFGFLSPHVIKVVEALDPKHQLEEYWNQKAVKLFGAEPIKEGEKDDTEKGGASDPSLDRDTRLLRGLLKKATPEELVMMHGLLCGETRNTELKEELSTLVDKMEISP</sequence>
<comment type="function">
    <text evidence="9 10 11 12 13 14 15 17 18 19 20 21 22">Transcriptional repressor (PubMed:25578968). Histone demethylase that demethylates 'Lys-4' (H3K4me) of histone H3 with a higher activity for H3K4me3 and H3K4me2 than H3K4me1 (PubMed:29233856). No activity on H3K9me3/2, H3K36me3/2 and H3K27me3/2 (PubMed:29233856). Function as a nocturne 'eraser' to counteract the diurnal 'writer' methylase activity of ATXR3/SDG2 thus orchestrating the circadian rhythm of histone modifications (e.g. H3K4me3) and modulating the rhythmic expression of diurnal target genes; this mechanism also relies on the circadian clock oscillators CCA1 and LHY (PubMed:31429787). Involved in a negative regulation of root meristem growth upon suboptimal root growth conditions (PubMed:31826870). Represses FT and TSF expression to inhibit the floral transition. Binds around the transcription start site of the FT locus. Involved in the DRM2-mediated maintenance of DNA methylation, but not required for the de novo DNA methylation. Required for demethylating histone H3K4me3 at the target of RNA silencing. Counteracts the DNA methylation of expressed transgenes; specific attenuation of transgene DNA methylation enhances the production of aberrant RNAs (e.g. uncapped and antisense) that readily induce systemic RDR6-dependent post-transcriptional transgene silencing (PTGS) spreading (PubMed:33986281). Together with NAC051/NAC052 and NAC050, regulates gene expression and flowering time, probably by the promotion of RNA-mediated gene silencing (PubMed:25578968). Together with JMJ16 and JMJ17, required for plant growth and development (PubMed:31038749). Promotes local and systemic immunity (especially toward the bacterial pathogen Pseudomonas syringae Pst DC3000 avrRpt2) by regulating positively pathogen-induced H3K4me3 enrichment and expression of defense genes involved in salicylic acid (SA)- and pipecolic acid (Pip)-mediated defense pathways (e.g. PR1, FMO1, ALD1 and SARD4) (PubMed:31622519).</text>
</comment>
<comment type="catalytic activity">
    <reaction evidence="9 10 11 17">
        <text>N(6),N(6),N(6)-trimethyl-L-lysyl(4)-[histone H3] + 2-oxoglutarate + O2 = N(6),N(6)-dimethyl-L-lysyl(4)-[histone H3] + formaldehyde + succinate + CO2</text>
        <dbReference type="Rhea" id="RHEA:60212"/>
        <dbReference type="Rhea" id="RHEA-COMP:15537"/>
        <dbReference type="Rhea" id="RHEA-COMP:15540"/>
        <dbReference type="ChEBI" id="CHEBI:15379"/>
        <dbReference type="ChEBI" id="CHEBI:16526"/>
        <dbReference type="ChEBI" id="CHEBI:16810"/>
        <dbReference type="ChEBI" id="CHEBI:16842"/>
        <dbReference type="ChEBI" id="CHEBI:30031"/>
        <dbReference type="ChEBI" id="CHEBI:61961"/>
        <dbReference type="ChEBI" id="CHEBI:61976"/>
    </reaction>
    <physiologicalReaction direction="left-to-right" evidence="9 10 11 17">
        <dbReference type="Rhea" id="RHEA:60213"/>
    </physiologicalReaction>
</comment>
<comment type="catalytic activity">
    <reaction evidence="9 10 11 17">
        <text>N(6),N(6)-dimethyl-L-lysyl(4)-[histone H3] + 2-oxoglutarate + O2 = N(6)-methyl-L-lysyl(4)-[histone H3] + formaldehyde + succinate + CO2</text>
        <dbReference type="Rhea" id="RHEA:60216"/>
        <dbReference type="Rhea" id="RHEA-COMP:15540"/>
        <dbReference type="Rhea" id="RHEA-COMP:15543"/>
        <dbReference type="ChEBI" id="CHEBI:15379"/>
        <dbReference type="ChEBI" id="CHEBI:16526"/>
        <dbReference type="ChEBI" id="CHEBI:16810"/>
        <dbReference type="ChEBI" id="CHEBI:16842"/>
        <dbReference type="ChEBI" id="CHEBI:30031"/>
        <dbReference type="ChEBI" id="CHEBI:61929"/>
        <dbReference type="ChEBI" id="CHEBI:61976"/>
    </reaction>
    <physiologicalReaction direction="left-to-right" evidence="9 10 11 17">
        <dbReference type="Rhea" id="RHEA:60217"/>
    </physiologicalReaction>
</comment>
<comment type="catalytic activity">
    <reaction evidence="9 10 11 17">
        <text>N(6)-methyl-L-lysyl(4)-[histone H3] + 2-oxoglutarate + O2 = L-lysyl(4)-[histone H3] + formaldehyde + succinate + CO2</text>
        <dbReference type="Rhea" id="RHEA:60220"/>
        <dbReference type="Rhea" id="RHEA-COMP:15543"/>
        <dbReference type="Rhea" id="RHEA-COMP:15547"/>
        <dbReference type="ChEBI" id="CHEBI:15379"/>
        <dbReference type="ChEBI" id="CHEBI:16526"/>
        <dbReference type="ChEBI" id="CHEBI:16810"/>
        <dbReference type="ChEBI" id="CHEBI:16842"/>
        <dbReference type="ChEBI" id="CHEBI:29969"/>
        <dbReference type="ChEBI" id="CHEBI:30031"/>
        <dbReference type="ChEBI" id="CHEBI:61929"/>
    </reaction>
    <physiologicalReaction direction="left-to-right" evidence="9 10 11 17">
        <dbReference type="Rhea" id="RHEA:60221"/>
    </physiologicalReaction>
</comment>
<comment type="catalytic activity">
    <reaction evidence="9 10 11 17">
        <text>N(6),N(6),N(6)-trimethyl-L-lysyl(4)-[histone H3] + 3 2-oxoglutarate + 3 O2 = L-lysyl(4)-[histone H3] + 3 formaldehyde + 3 succinate + 3 CO2</text>
        <dbReference type="Rhea" id="RHEA:60208"/>
        <dbReference type="Rhea" id="RHEA-COMP:15537"/>
        <dbReference type="Rhea" id="RHEA-COMP:15547"/>
        <dbReference type="ChEBI" id="CHEBI:15379"/>
        <dbReference type="ChEBI" id="CHEBI:16526"/>
        <dbReference type="ChEBI" id="CHEBI:16810"/>
        <dbReference type="ChEBI" id="CHEBI:16842"/>
        <dbReference type="ChEBI" id="CHEBI:29969"/>
        <dbReference type="ChEBI" id="CHEBI:30031"/>
        <dbReference type="ChEBI" id="CHEBI:61961"/>
        <dbReference type="EC" id="1.14.11.67"/>
    </reaction>
    <physiologicalReaction direction="left-to-right" evidence="9 10 11 17">
        <dbReference type="Rhea" id="RHEA:60209"/>
    </physiologicalReaction>
</comment>
<comment type="cofactor">
    <cofactor evidence="11 17">
        <name>Fe(2+)</name>
        <dbReference type="ChEBI" id="CHEBI:29033"/>
    </cofactor>
    <text evidence="11 17">Binds 1 Fe(2+) ion per subunit.</text>
</comment>
<comment type="subunit">
    <text evidence="14 15 16">Interacts with NAC050 and NAC051/NAC052 (PubMed:25578968, PubMed:26617990). Interacts with THAL in the nucleus (PubMed:27792779).</text>
</comment>
<comment type="interaction">
    <interactant intactId="EBI-4429826">
        <id>Q8GUI6</id>
    </interactant>
    <interactant intactId="EBI-4428214">
        <id>Q9SQX9</id>
        <label>NAC050</label>
    </interactant>
    <organismsDiffer>false</organismsDiffer>
    <experiments>4</experiments>
</comment>
<comment type="subcellular location">
    <subcellularLocation>
        <location evidence="9 10 13">Nucleus</location>
        <location evidence="9 10 13">Nucleoplasm</location>
    </subcellularLocation>
    <subcellularLocation>
        <location evidence="2 4 15 16">Nucleus</location>
    </subcellularLocation>
    <text>Not detected in the nucleolus and the chromocenters.</text>
</comment>
<comment type="alternative products">
    <event type="alternative splicing"/>
    <isoform>
        <id>Q8GUI6-1</id>
        <name>1</name>
        <sequence type="displayed"/>
    </isoform>
    <isoform>
        <id>Q8GUI6-2</id>
        <name>2</name>
        <sequence type="described" ref="VSP_041728"/>
    </isoform>
</comment>
<comment type="tissue specificity">
    <text evidence="8 9 11 14">Expressed in shoot apex, primary root tip, trichomes of young leaves, leaf vascular tissues, anther filaments and styles. Detected in inflorescences, leaves, stems, roots and siliques. Mostly expressed in floral organs, and, at low levels, in other organs (PubMed:25578968).</text>
</comment>
<comment type="developmental stage">
    <text evidence="21">Expressed in mature root vasculature and throughout root meristem.</text>
</comment>
<comment type="induction">
    <text evidence="19">Circadian-regulation with peak levels occurring at night and lower levels after dawn under both diurnal and constant light conditions in a CCA1- and LHY-dependent manner.</text>
</comment>
<comment type="disruption phenotype">
    <text evidence="9 10 11 14 15 18 19 20 21 22">Early flowering (especially in long day conditions), but normal development of all organs (PubMed:31038749). Partially redundant with ELF6. Increased H3K4 methylation on specific genes, thus leading to their derepression (PubMed:25578968, PubMed:31826870). Slightly increased levels of CCA1 and LHY circadian oscillators transcription factors as well as of other clock genes such as TOC1, PRR5, PRR7, PRR9, GI, ELF3, ELF4, and LUX associated with higher H3K4me3 levels near their promoters (PubMed:31429787). Impaired systemic RDR6-dependent post-transcriptional transgene silencing (PTGS) associated with reduced production of aberrant RNAs (e.g. uncapped and antisense) (PubMed:33986281). Abnormal root meristem size as well as partial suppression of reduced root meristem size and growth vigor observed in brx mutants (PubMed:31826870). Compromised in both local and systemic defense responses to the bacterial pathogen Pseudomonas syringae Pst DC3000 avrRpt2 due to abnormal H3K4me3 enrichment and reduced expression of defense genes involved in salicylic acid (SA)- and pipecolic acid (Pip)-mediated defense pathways (e.g. PR1, FMO1, ALD1 and SARD4) (PubMed:31622519). The double mutant jmj17-1 jmj14-1 has an early flowering phenotype (especially in long day conditions) (PubMed:31038749). The triple mutant jmj17-1 jmj14-1 jmj16-1 flowers even earlier (PubMed:31038749).</text>
</comment>
<comment type="similarity">
    <text evidence="26">Belongs to the JARID1 histone demethylase family.</text>
</comment>
<comment type="sequence caution" evidence="26">
    <conflict type="erroneous gene model prediction">
        <sequence resource="EMBL-CDS" id="CAB45806"/>
    </conflict>
</comment>
<comment type="sequence caution" evidence="26">
    <conflict type="erroneous gene model prediction">
        <sequence resource="EMBL-CDS" id="CAB79040"/>
    </conflict>
</comment>
<proteinExistence type="evidence at protein level"/>
<evidence type="ECO:0000255" key="1"/>
<evidence type="ECO:0000255" key="2">
    <source>
        <dbReference type="PROSITE-ProRule" id="PRU00537"/>
    </source>
</evidence>
<evidence type="ECO:0000255" key="3">
    <source>
        <dbReference type="PROSITE-ProRule" id="PRU00538"/>
    </source>
</evidence>
<evidence type="ECO:0000255" key="4">
    <source>
        <dbReference type="PROSITE-ProRule" id="PRU00768"/>
    </source>
</evidence>
<evidence type="ECO:0000255" key="5">
    <source>
        <dbReference type="PROSITE-ProRule" id="PRU00875"/>
    </source>
</evidence>
<evidence type="ECO:0000255" key="6">
    <source>
        <dbReference type="PROSITE-ProRule" id="PRU00876"/>
    </source>
</evidence>
<evidence type="ECO:0000256" key="7">
    <source>
        <dbReference type="SAM" id="MobiDB-lite"/>
    </source>
</evidence>
<evidence type="ECO:0000269" key="8">
    <source>
    </source>
</evidence>
<evidence type="ECO:0000269" key="9">
    <source>
    </source>
</evidence>
<evidence type="ECO:0000269" key="10">
    <source>
    </source>
</evidence>
<evidence type="ECO:0000269" key="11">
    <source>
    </source>
</evidence>
<evidence type="ECO:0000269" key="12">
    <source>
    </source>
</evidence>
<evidence type="ECO:0000269" key="13">
    <source>
    </source>
</evidence>
<evidence type="ECO:0000269" key="14">
    <source>
    </source>
</evidence>
<evidence type="ECO:0000269" key="15">
    <source>
    </source>
</evidence>
<evidence type="ECO:0000269" key="16">
    <source>
    </source>
</evidence>
<evidence type="ECO:0000269" key="17">
    <source>
    </source>
</evidence>
<evidence type="ECO:0000269" key="18">
    <source>
    </source>
</evidence>
<evidence type="ECO:0000269" key="19">
    <source>
    </source>
</evidence>
<evidence type="ECO:0000269" key="20">
    <source>
    </source>
</evidence>
<evidence type="ECO:0000269" key="21">
    <source>
    </source>
</evidence>
<evidence type="ECO:0000269" key="22">
    <source>
    </source>
</evidence>
<evidence type="ECO:0000303" key="23">
    <source>
    </source>
</evidence>
<evidence type="ECO:0000303" key="24">
    <source>
    </source>
</evidence>
<evidence type="ECO:0000303" key="25">
    <source>
    </source>
</evidence>
<evidence type="ECO:0000305" key="26"/>
<evidence type="ECO:0000312" key="27">
    <source>
        <dbReference type="Araport" id="AT4G20400"/>
    </source>
</evidence>
<evidence type="ECO:0000312" key="28">
    <source>
        <dbReference type="EMBL" id="CAB45806.1"/>
    </source>
</evidence>
<evidence type="ECO:0007744" key="29">
    <source>
        <dbReference type="PDB" id="5YKN"/>
    </source>
</evidence>
<evidence type="ECO:0007744" key="30">
    <source>
        <dbReference type="PDB" id="5YKO"/>
    </source>
</evidence>
<evidence type="ECO:0007829" key="31">
    <source>
        <dbReference type="PDB" id="5YKN"/>
    </source>
</evidence>
<evidence type="ECO:0007829" key="32">
    <source>
        <dbReference type="PDB" id="5YKO"/>
    </source>
</evidence>
<reference key="1">
    <citation type="journal article" date="1999" name="Nature">
        <title>Sequence and analysis of chromosome 4 of the plant Arabidopsis thaliana.</title>
        <authorList>
            <person name="Mayer K.F.X."/>
            <person name="Schueller C."/>
            <person name="Wambutt R."/>
            <person name="Murphy G."/>
            <person name="Volckaert G."/>
            <person name="Pohl T."/>
            <person name="Duesterhoeft A."/>
            <person name="Stiekema W."/>
            <person name="Entian K.-D."/>
            <person name="Terryn N."/>
            <person name="Harris B."/>
            <person name="Ansorge W."/>
            <person name="Brandt P."/>
            <person name="Grivell L.A."/>
            <person name="Rieger M."/>
            <person name="Weichselgartner M."/>
            <person name="de Simone V."/>
            <person name="Obermaier B."/>
            <person name="Mache R."/>
            <person name="Mueller M."/>
            <person name="Kreis M."/>
            <person name="Delseny M."/>
            <person name="Puigdomenech P."/>
            <person name="Watson M."/>
            <person name="Schmidtheini T."/>
            <person name="Reichert B."/>
            <person name="Portetelle D."/>
            <person name="Perez-Alonso M."/>
            <person name="Boutry M."/>
            <person name="Bancroft I."/>
            <person name="Vos P."/>
            <person name="Hoheisel J."/>
            <person name="Zimmermann W."/>
            <person name="Wedler H."/>
            <person name="Ridley P."/>
            <person name="Langham S.-A."/>
            <person name="McCullagh B."/>
            <person name="Bilham L."/>
            <person name="Robben J."/>
            <person name="van der Schueren J."/>
            <person name="Grymonprez B."/>
            <person name="Chuang Y.-J."/>
            <person name="Vandenbussche F."/>
            <person name="Braeken M."/>
            <person name="Weltjens I."/>
            <person name="Voet M."/>
            <person name="Bastiaens I."/>
            <person name="Aert R."/>
            <person name="Defoor E."/>
            <person name="Weitzenegger T."/>
            <person name="Bothe G."/>
            <person name="Ramsperger U."/>
            <person name="Hilbert H."/>
            <person name="Braun M."/>
            <person name="Holzer E."/>
            <person name="Brandt A."/>
            <person name="Peters S."/>
            <person name="van Staveren M."/>
            <person name="Dirkse W."/>
            <person name="Mooijman P."/>
            <person name="Klein Lankhorst R."/>
            <person name="Rose M."/>
            <person name="Hauf J."/>
            <person name="Koetter P."/>
            <person name="Berneiser S."/>
            <person name="Hempel S."/>
            <person name="Feldpausch M."/>
            <person name="Lamberth S."/>
            <person name="Van den Daele H."/>
            <person name="De Keyser A."/>
            <person name="Buysshaert C."/>
            <person name="Gielen J."/>
            <person name="Villarroel R."/>
            <person name="De Clercq R."/>
            <person name="van Montagu M."/>
            <person name="Rogers J."/>
            <person name="Cronin A."/>
            <person name="Quail M.A."/>
            <person name="Bray-Allen S."/>
            <person name="Clark L."/>
            <person name="Doggett J."/>
            <person name="Hall S."/>
            <person name="Kay M."/>
            <person name="Lennard N."/>
            <person name="McLay K."/>
            <person name="Mayes R."/>
            <person name="Pettett A."/>
            <person name="Rajandream M.A."/>
            <person name="Lyne M."/>
            <person name="Benes V."/>
            <person name="Rechmann S."/>
            <person name="Borkova D."/>
            <person name="Bloecker H."/>
            <person name="Scharfe M."/>
            <person name="Grimm M."/>
            <person name="Loehnert T.-H."/>
            <person name="Dose S."/>
            <person name="de Haan M."/>
            <person name="Maarse A.C."/>
            <person name="Schaefer M."/>
            <person name="Mueller-Auer S."/>
            <person name="Gabel C."/>
            <person name="Fuchs M."/>
            <person name="Fartmann B."/>
            <person name="Granderath K."/>
            <person name="Dauner D."/>
            <person name="Herzl A."/>
            <person name="Neumann S."/>
            <person name="Argiriou A."/>
            <person name="Vitale D."/>
            <person name="Liguori R."/>
            <person name="Piravandi E."/>
            <person name="Massenet O."/>
            <person name="Quigley F."/>
            <person name="Clabauld G."/>
            <person name="Muendlein A."/>
            <person name="Felber R."/>
            <person name="Schnabl S."/>
            <person name="Hiller R."/>
            <person name="Schmidt W."/>
            <person name="Lecharny A."/>
            <person name="Aubourg S."/>
            <person name="Chefdor F."/>
            <person name="Cooke R."/>
            <person name="Berger C."/>
            <person name="Monfort A."/>
            <person name="Casacuberta E."/>
            <person name="Gibbons T."/>
            <person name="Weber N."/>
            <person name="Vandenbol M."/>
            <person name="Bargues M."/>
            <person name="Terol J."/>
            <person name="Torres A."/>
            <person name="Perez-Perez A."/>
            <person name="Purnelle B."/>
            <person name="Bent E."/>
            <person name="Johnson S."/>
            <person name="Tacon D."/>
            <person name="Jesse T."/>
            <person name="Heijnen L."/>
            <person name="Schwarz S."/>
            <person name="Scholler P."/>
            <person name="Heber S."/>
            <person name="Francs P."/>
            <person name="Bielke C."/>
            <person name="Frishman D."/>
            <person name="Haase D."/>
            <person name="Lemcke K."/>
            <person name="Mewes H.-W."/>
            <person name="Stocker S."/>
            <person name="Zaccaria P."/>
            <person name="Bevan M."/>
            <person name="Wilson R.K."/>
            <person name="de la Bastide M."/>
            <person name="Habermann K."/>
            <person name="Parnell L."/>
            <person name="Dedhia N."/>
            <person name="Gnoj L."/>
            <person name="Schutz K."/>
            <person name="Huang E."/>
            <person name="Spiegel L."/>
            <person name="Sekhon M."/>
            <person name="Murray J."/>
            <person name="Sheet P."/>
            <person name="Cordes M."/>
            <person name="Abu-Threideh J."/>
            <person name="Stoneking T."/>
            <person name="Kalicki J."/>
            <person name="Graves T."/>
            <person name="Harmon G."/>
            <person name="Edwards J."/>
            <person name="Latreille P."/>
            <person name="Courtney L."/>
            <person name="Cloud J."/>
            <person name="Abbott A."/>
            <person name="Scott K."/>
            <person name="Johnson D."/>
            <person name="Minx P."/>
            <person name="Bentley D."/>
            <person name="Fulton B."/>
            <person name="Miller N."/>
            <person name="Greco T."/>
            <person name="Kemp K."/>
            <person name="Kramer J."/>
            <person name="Fulton L."/>
            <person name="Mardis E."/>
            <person name="Dante M."/>
            <person name="Pepin K."/>
            <person name="Hillier L.W."/>
            <person name="Nelson J."/>
            <person name="Spieth J."/>
            <person name="Ryan E."/>
            <person name="Andrews S."/>
            <person name="Geisel C."/>
            <person name="Layman D."/>
            <person name="Du H."/>
            <person name="Ali J."/>
            <person name="Berghoff A."/>
            <person name="Jones K."/>
            <person name="Drone K."/>
            <person name="Cotton M."/>
            <person name="Joshu C."/>
            <person name="Antonoiu B."/>
            <person name="Zidanic M."/>
            <person name="Strong C."/>
            <person name="Sun H."/>
            <person name="Lamar B."/>
            <person name="Yordan C."/>
            <person name="Ma P."/>
            <person name="Zhong J."/>
            <person name="Preston R."/>
            <person name="Vil D."/>
            <person name="Shekher M."/>
            <person name="Matero A."/>
            <person name="Shah R."/>
            <person name="Swaby I.K."/>
            <person name="O'Shaughnessy A."/>
            <person name="Rodriguez M."/>
            <person name="Hoffman J."/>
            <person name="Till S."/>
            <person name="Granat S."/>
            <person name="Shohdy N."/>
            <person name="Hasegawa A."/>
            <person name="Hameed A."/>
            <person name="Lodhi M."/>
            <person name="Johnson A."/>
            <person name="Chen E."/>
            <person name="Marra M.A."/>
            <person name="Martienssen R."/>
            <person name="McCombie W.R."/>
        </authorList>
    </citation>
    <scope>NUCLEOTIDE SEQUENCE [LARGE SCALE GENOMIC DNA]</scope>
    <source>
        <strain>cv. Columbia</strain>
    </source>
</reference>
<reference key="2">
    <citation type="journal article" date="2017" name="Plant J.">
        <title>Araport11: a complete reannotation of the Arabidopsis thaliana reference genome.</title>
        <authorList>
            <person name="Cheng C.Y."/>
            <person name="Krishnakumar V."/>
            <person name="Chan A.P."/>
            <person name="Thibaud-Nissen F."/>
            <person name="Schobel S."/>
            <person name="Town C.D."/>
        </authorList>
    </citation>
    <scope>GENOME REANNOTATION</scope>
    <source>
        <strain>cv. Columbia</strain>
    </source>
</reference>
<reference key="3">
    <citation type="journal article" date="2003" name="Science">
        <title>Empirical analysis of transcriptional activity in the Arabidopsis genome.</title>
        <authorList>
            <person name="Yamada K."/>
            <person name="Lim J."/>
            <person name="Dale J.M."/>
            <person name="Chen H."/>
            <person name="Shinn P."/>
            <person name="Palm C.J."/>
            <person name="Southwick A.M."/>
            <person name="Wu H.C."/>
            <person name="Kim C.J."/>
            <person name="Nguyen M."/>
            <person name="Pham P.K."/>
            <person name="Cheuk R.F."/>
            <person name="Karlin-Newmann G."/>
            <person name="Liu S.X."/>
            <person name="Lam B."/>
            <person name="Sakano H."/>
            <person name="Wu T."/>
            <person name="Yu G."/>
            <person name="Miranda M."/>
            <person name="Quach H.L."/>
            <person name="Tripp M."/>
            <person name="Chang C.H."/>
            <person name="Lee J.M."/>
            <person name="Toriumi M.J."/>
            <person name="Chan M.M."/>
            <person name="Tang C.C."/>
            <person name="Onodera C.S."/>
            <person name="Deng J.M."/>
            <person name="Akiyama K."/>
            <person name="Ansari Y."/>
            <person name="Arakawa T."/>
            <person name="Banh J."/>
            <person name="Banno F."/>
            <person name="Bowser L."/>
            <person name="Brooks S.Y."/>
            <person name="Carninci P."/>
            <person name="Chao Q."/>
            <person name="Choy N."/>
            <person name="Enju A."/>
            <person name="Goldsmith A.D."/>
            <person name="Gurjal M."/>
            <person name="Hansen N.F."/>
            <person name="Hayashizaki Y."/>
            <person name="Johnson-Hopson C."/>
            <person name="Hsuan V.W."/>
            <person name="Iida K."/>
            <person name="Karnes M."/>
            <person name="Khan S."/>
            <person name="Koesema E."/>
            <person name="Ishida J."/>
            <person name="Jiang P.X."/>
            <person name="Jones T."/>
            <person name="Kawai J."/>
            <person name="Kamiya A."/>
            <person name="Meyers C."/>
            <person name="Nakajima M."/>
            <person name="Narusaka M."/>
            <person name="Seki M."/>
            <person name="Sakurai T."/>
            <person name="Satou M."/>
            <person name="Tamse R."/>
            <person name="Vaysberg M."/>
            <person name="Wallender E.K."/>
            <person name="Wong C."/>
            <person name="Yamamura Y."/>
            <person name="Yuan S."/>
            <person name="Shinozaki K."/>
            <person name="Davis R.W."/>
            <person name="Theologis A."/>
            <person name="Ecker J.R."/>
        </authorList>
    </citation>
    <scope>NUCLEOTIDE SEQUENCE [LARGE SCALE MRNA] (ISOFORM 1)</scope>
    <source>
        <strain>cv. Columbia</strain>
    </source>
</reference>
<reference key="4">
    <citation type="journal article" date="2008" name="BMC Evol. Biol.">
        <title>Evolutionary history of histone demethylase families: distinct evolutionary patterns suggest functional divergence.</title>
        <authorList>
            <person name="Zhou X."/>
            <person name="Ma H."/>
        </authorList>
    </citation>
    <scope>GENE FAMILY</scope>
    <scope>NOMENCLATURE</scope>
</reference>
<reference key="5">
    <citation type="journal article" date="2008" name="J. Integr. Plant Biol.">
        <title>Comparative analysis of JmjC domain-containing proteins reveals the potential histone demethylases in Arabidopsis and rice.</title>
        <authorList>
            <person name="Lu F."/>
            <person name="Li G."/>
            <person name="Cui X."/>
            <person name="Liu C."/>
            <person name="Wang X.-J."/>
            <person name="Cao X."/>
        </authorList>
    </citation>
    <scope>GENE FAMILY</scope>
    <scope>NOMENCLATURE</scope>
    <scope>TISSUE SPECIFICITY</scope>
</reference>
<reference key="6">
    <citation type="journal article" date="2009" name="PLoS ONE">
        <title>Repression of FLOWERING LOCUS T chromatin by functionally redundant histone H3 lysine 4 demethylases in Arabidopsis.</title>
        <authorList>
            <person name="Jeong J.H."/>
            <person name="Song H.R."/>
            <person name="Ko J.H."/>
            <person name="Jeong Y.M."/>
            <person name="Kwon Y.E."/>
            <person name="Seol J.H."/>
            <person name="Amasino R.M."/>
            <person name="Noh B."/>
            <person name="Noh Y.S."/>
        </authorList>
    </citation>
    <scope>FUNCTION</scope>
    <scope>CATALYTIC ACTIVITY</scope>
    <scope>DISRUPTION PHENOTYPE</scope>
    <scope>TISSUE SPECIFICITY</scope>
    <scope>SUBCELLULAR LOCATION</scope>
</reference>
<reference key="7">
    <citation type="journal article" date="2010" name="Cell Res.">
        <title>JMJ14 is an H3K4 demethylase regulating flowering time in Arabidopsis.</title>
        <authorList>
            <person name="Lu F."/>
            <person name="Cui X."/>
            <person name="Zhang S."/>
            <person name="Liu C."/>
            <person name="Cao X."/>
        </authorList>
    </citation>
    <scope>FUNCTION</scope>
    <scope>CATALYTIC ACTIVITY</scope>
    <scope>MUTAGENESIS OF HIS-397</scope>
    <scope>SUBCELLULAR LOCATION</scope>
    <scope>DISRUPTION PHENOTYPE</scope>
</reference>
<reference key="8">
    <citation type="journal article" date="2010" name="EMBO Rep.">
        <title>Involvement of a Jumonji-C domain-containing histone demethylase in DRM2-mediated maintenance of DNA methylation.</title>
        <authorList>
            <person name="Deleris A."/>
            <person name="Greenberg M.V."/>
            <person name="Ausin I."/>
            <person name="Law R.W."/>
            <person name="Moissiard G."/>
            <person name="Schubert D."/>
            <person name="Jacobsen S.E."/>
        </authorList>
    </citation>
    <scope>FUNCTION</scope>
    <scope>SUBCELLULAR LOCATION</scope>
</reference>
<reference key="9">
    <citation type="journal article" date="2010" name="Genes Dev.">
        <title>JMJ14, a JmjC domain protein, is required for RNA silencing and cell-to-cell movement of an RNA silencing signal in Arabidopsis.</title>
        <authorList>
            <person name="Searle I.R."/>
            <person name="Pontes O."/>
            <person name="Melnyk C.W."/>
            <person name="Smith L.M."/>
            <person name="Baulcombe D.C."/>
        </authorList>
    </citation>
    <scope>FUNCTION</scope>
    <scope>MUTAGENESIS OF GLU-387</scope>
</reference>
<reference key="10">
    <citation type="journal article" date="2010" name="Plant J.">
        <title>A plant-specific histone H3 lysine 4 demethylase represses the floral transition in Arabidopsis.</title>
        <authorList>
            <person name="Yang W."/>
            <person name="Jiang D."/>
            <person name="Jiang J."/>
            <person name="He Y."/>
        </authorList>
    </citation>
    <scope>FUNCTION</scope>
    <scope>CATALYTIC ACTIVITY</scope>
    <scope>DISRUPTION PHENOTYPE</scope>
    <scope>TISSUE SPECIFICITY</scope>
    <scope>COFACTOR</scope>
</reference>
<reference key="11">
    <citation type="journal article" date="2015" name="Cell Discov.">
        <title>C-terminal domains of a histone demethylase interact with a pair of transcription factors and mediate specific chromatin association.</title>
        <authorList>
            <person name="Zhang S."/>
            <person name="Zhou B."/>
            <person name="Kang Y."/>
            <person name="Cui X."/>
            <person name="Liu A."/>
            <person name="Deleris A."/>
            <person name="Greenberg M.V.C."/>
            <person name="Cui X."/>
            <person name="Qiu Q."/>
            <person name="Lu F."/>
            <person name="Wohlschlegel J.A."/>
            <person name="Jacobsen S.E."/>
            <person name="Cao X."/>
        </authorList>
    </citation>
    <scope>FUNCTION</scope>
    <scope>DISRUPTION PHENOTYPE</scope>
    <scope>INTERACTION WITH JMJ14</scope>
    <scope>SUBCELLULAR LOCATION</scope>
    <source>
        <strain>cv. Columbia</strain>
    </source>
</reference>
<reference key="12">
    <citation type="journal article" date="2015" name="Nucleic Acids Res.">
        <title>Two novel NAC transcription factors regulate gene expression and flowering time by associating with the histone demethylase JMJ14.</title>
        <authorList>
            <person name="Ning Y.-Q."/>
            <person name="Ma Z.-Y."/>
            <person name="Huang H.-W."/>
            <person name="Mo H."/>
            <person name="Zhao T.-T."/>
            <person name="Li L."/>
            <person name="Cai T."/>
            <person name="Chen S."/>
            <person name="Ma L."/>
            <person name="He X.-J."/>
        </authorList>
    </citation>
    <scope>FUNCTION</scope>
    <scope>DISRUPTION PHENOTYPE</scope>
    <scope>INTERACTION WITH NAC050 AND NAC051/NAC052</scope>
    <scope>TISSUE SPECIFICITY</scope>
    <source>
        <strain>cv. Columbia</strain>
    </source>
</reference>
<reference key="13">
    <citation type="journal article" date="2016" name="PLoS Genet.">
        <title>Dual role of a SAS10/C1D family protein in ribosomal RNA gene expression and processing is essential for reproduction in Arabidopsis thaliana.</title>
        <authorList>
            <person name="Chen Y.-J.C."/>
            <person name="Wang H.-J."/>
            <person name="Jauh G.-Y."/>
        </authorList>
    </citation>
    <scope>SUBCELLULAR LOCATION</scope>
    <scope>INTERACTION WITH THAL</scope>
    <source>
        <strain>cv. Columbia</strain>
    </source>
</reference>
<reference key="14">
    <citation type="journal article" date="2019" name="Development">
        <title>Conditional effects of the epigenetic regulator JUMONJI 14 in Arabidopsis root growth.</title>
        <authorList>
            <person name="Cattaneo P."/>
            <person name="Graeff M."/>
            <person name="Marhava P."/>
            <person name="Hardtke C.S."/>
        </authorList>
    </citation>
    <scope>FUNCTION</scope>
    <scope>DISRUPTION PHENOTYPE</scope>
    <scope>DEVELOPMENTAL STAGE</scope>
</reference>
<reference key="15">
    <citation type="journal article" date="2019" name="Genome Biol.">
        <title>Diurnal regulation of SDG2 and JMJ14 by circadian clock oscillators orchestrates histone modification rhythms in Arabidopsis.</title>
        <authorList>
            <person name="Song Q."/>
            <person name="Huang T.-Y."/>
            <person name="Yu H.H."/>
            <person name="Ando A."/>
            <person name="Mas P."/>
            <person name="Ha M."/>
            <person name="Chen Z.J."/>
        </authorList>
    </citation>
    <scope>FUNCTION</scope>
    <scope>DISRUPTION PHENOTYPE</scope>
    <scope>INDUCTION</scope>
    <source>
        <strain>cv. Columbia</strain>
        <strain>cv. Wassilewskija</strain>
    </source>
</reference>
<reference key="16">
    <citation type="journal article" date="2019" name="New Phytol.">
        <title>Arabidopsis histone H3K4 demethylase JMJ17 functions in dehydration stress response.</title>
        <authorList>
            <person name="Huang S."/>
            <person name="Zhang A."/>
            <person name="Jin J.B."/>
            <person name="Zhao B."/>
            <person name="Wang T.-J."/>
            <person name="Wu Y."/>
            <person name="Wang S."/>
            <person name="Liu Y."/>
            <person name="Wang J."/>
            <person name="Guo P."/>
            <person name="Ahmad R."/>
            <person name="Liu B."/>
            <person name="Xu Z.-Y."/>
        </authorList>
    </citation>
    <scope>FUNCTION</scope>
    <scope>DISRUPTION PHENOTYPE</scope>
    <source>
        <strain>cv. Columbia</strain>
    </source>
</reference>
<reference key="17">
    <citation type="journal article" date="2020" name="New Phytol.">
        <title>JMJ14 encoded H3K4 demethylase modulates immune responses by regulating defence gene expression and pipecolic acid levels.</title>
        <authorList>
            <person name="Li D."/>
            <person name="Liu R."/>
            <person name="Singh D."/>
            <person name="Yuan X."/>
            <person name="Kachroo P."/>
            <person name="Raina R."/>
        </authorList>
    </citation>
    <scope>FUNCTION</scope>
    <scope>DISRUPTION PHENOTYPE</scope>
    <source>
        <strain>cv. Columbia</strain>
    </source>
</reference>
<reference key="18">
    <citation type="journal article" date="2021" name="Nat. Commun.">
        <title>Contrasting epigenetic control of transgenes and endogenous genes promotes post-transcriptional transgene silencing in Arabidopsis.</title>
        <authorList>
            <person name="Butel N."/>
            <person name="Yu A."/>
            <person name="Le Masson I."/>
            <person name="Borges F."/>
            <person name="Elmayan T."/>
            <person name="Taochy C."/>
            <person name="Gursanscky N.R."/>
            <person name="Cao J."/>
            <person name="Bi S."/>
            <person name="Sawyer A."/>
            <person name="Carroll B.J."/>
            <person name="Vaucheret H."/>
        </authorList>
    </citation>
    <scope>FUNCTION</scope>
    <scope>DISRUPTION PHENOTYPE</scope>
    <source>
        <strain>cv. Columbia</strain>
    </source>
</reference>
<reference key="19">
    <citation type="journal article" date="2018" name="Plant Cell">
        <title>Structure of the Arabidopsis JMJ14-H3K4me3 Complex Provides Insight into the Substrate Specificity of KDM5 Subfamily Histone Demethylases.</title>
        <authorList>
            <person name="Yang Z."/>
            <person name="Qiu Q."/>
            <person name="Chen W."/>
            <person name="Jia B."/>
            <person name="Chen X."/>
            <person name="Hu H."/>
            <person name="He K."/>
            <person name="Deng X."/>
            <person name="Li S."/>
            <person name="Tao W.A."/>
            <person name="Cao X."/>
            <person name="Du J."/>
        </authorList>
    </citation>
    <scope>X-RAY CRYSTALLOGRAPHY (2.30 ANGSTROMS) OF 35-597 IN COMPLEX WITH HISTONE H3K4ME3; NICKEL IONS AND ZINC IONS</scope>
    <scope>FUNCTION</scope>
    <scope>CATALYTIC ACTIVITY</scope>
    <scope>MUTAGENESIS OF PHE-171; GLU-285; SER-290; TYR-298; HIS-309; GLU-311; ASP-312; VAL-363; HIS-397 AND GLU-516</scope>
</reference>
<name>JMJ14_ARATH</name>
<organism>
    <name type="scientific">Arabidopsis thaliana</name>
    <name type="common">Mouse-ear cress</name>
    <dbReference type="NCBI Taxonomy" id="3702"/>
    <lineage>
        <taxon>Eukaryota</taxon>
        <taxon>Viridiplantae</taxon>
        <taxon>Streptophyta</taxon>
        <taxon>Embryophyta</taxon>
        <taxon>Tracheophyta</taxon>
        <taxon>Spermatophyta</taxon>
        <taxon>Magnoliopsida</taxon>
        <taxon>eudicotyledons</taxon>
        <taxon>Gunneridae</taxon>
        <taxon>Pentapetalae</taxon>
        <taxon>rosids</taxon>
        <taxon>malvids</taxon>
        <taxon>Brassicales</taxon>
        <taxon>Brassicaceae</taxon>
        <taxon>Camelineae</taxon>
        <taxon>Arabidopsis</taxon>
    </lineage>
</organism>
<protein>
    <recommendedName>
        <fullName evidence="23">Lysine-specific demethylase JMJ14</fullName>
        <ecNumber evidence="9 10 11 17">1.14.11.67</ecNumber>
    </recommendedName>
    <alternativeName>
        <fullName evidence="23">Jumonji domain-containing protein 14</fullName>
        <shortName evidence="23">AtJMJ14</shortName>
        <shortName evidence="23">Protein JUMONJI 14</shortName>
    </alternativeName>
    <alternativeName>
        <fullName evidence="25">Jumonji domain-containing protein 4</fullName>
        <shortName evidence="25">AtJmj4</shortName>
    </alternativeName>
    <alternativeName>
        <fullName evidence="23">Lysine-specific histone demethylase JMJ14</fullName>
    </alternativeName>
    <alternativeName>
        <fullName evidence="26">[histone H3]-trimethyl-L-lysine(4) monodemethylase JMJ14</fullName>
    </alternativeName>
</protein>
<dbReference type="EC" id="1.14.11.67" evidence="9 10 11 17"/>
<dbReference type="EMBL" id="AL080253">
    <property type="protein sequence ID" value="CAB45806.1"/>
    <property type="status" value="ALT_SEQ"/>
    <property type="molecule type" value="Genomic_DNA"/>
</dbReference>
<dbReference type="EMBL" id="AL161553">
    <property type="protein sequence ID" value="CAB79040.1"/>
    <property type="status" value="ALT_SEQ"/>
    <property type="molecule type" value="Genomic_DNA"/>
</dbReference>
<dbReference type="EMBL" id="CP002687">
    <property type="protein sequence ID" value="AEE84324.1"/>
    <property type="molecule type" value="Genomic_DNA"/>
</dbReference>
<dbReference type="EMBL" id="CP002687">
    <property type="protein sequence ID" value="AEE84325.1"/>
    <property type="molecule type" value="Genomic_DNA"/>
</dbReference>
<dbReference type="EMBL" id="BT002486">
    <property type="protein sequence ID" value="AAO00846.1"/>
    <property type="molecule type" value="mRNA"/>
</dbReference>
<dbReference type="EMBL" id="BT010548">
    <property type="protein sequence ID" value="AAQ65171.1"/>
    <property type="molecule type" value="mRNA"/>
</dbReference>
<dbReference type="PIR" id="T10582">
    <property type="entry name" value="T10582"/>
</dbReference>
<dbReference type="RefSeq" id="NP_001031681.1">
    <molecule id="Q8GUI6-2"/>
    <property type="nucleotide sequence ID" value="NM_001036604.1"/>
</dbReference>
<dbReference type="RefSeq" id="NP_193773.2">
    <molecule id="Q8GUI6-1"/>
    <property type="nucleotide sequence ID" value="NM_118159.3"/>
</dbReference>
<dbReference type="PDB" id="5YKN">
    <property type="method" value="X-ray"/>
    <property type="resolution" value="2.30 A"/>
    <property type="chains" value="A=35-597"/>
</dbReference>
<dbReference type="PDB" id="5YKO">
    <property type="method" value="X-ray"/>
    <property type="resolution" value="2.90 A"/>
    <property type="chains" value="A=35-597"/>
</dbReference>
<dbReference type="PDBsum" id="5YKN"/>
<dbReference type="PDBsum" id="5YKO"/>
<dbReference type="SMR" id="Q8GUI6"/>
<dbReference type="BioGRID" id="13079">
    <property type="interactions" value="4"/>
</dbReference>
<dbReference type="FunCoup" id="Q8GUI6">
    <property type="interactions" value="1920"/>
</dbReference>
<dbReference type="IntAct" id="Q8GUI6">
    <property type="interactions" value="3"/>
</dbReference>
<dbReference type="STRING" id="3702.Q8GUI6"/>
<dbReference type="GlyGen" id="Q8GUI6">
    <property type="glycosylation" value="1 site"/>
</dbReference>
<dbReference type="iPTMnet" id="Q8GUI6"/>
<dbReference type="PaxDb" id="3702-AT4G20400.1"/>
<dbReference type="ProteomicsDB" id="232294">
    <molecule id="Q8GUI6-1"/>
</dbReference>
<dbReference type="EnsemblPlants" id="AT4G20400.1">
    <molecule id="Q8GUI6-1"/>
    <property type="protein sequence ID" value="AT4G20400.1"/>
    <property type="gene ID" value="AT4G20400"/>
</dbReference>
<dbReference type="EnsemblPlants" id="AT4G20400.2">
    <molecule id="Q8GUI6-2"/>
    <property type="protein sequence ID" value="AT4G20400.2"/>
    <property type="gene ID" value="AT4G20400"/>
</dbReference>
<dbReference type="GeneID" id="827788"/>
<dbReference type="Gramene" id="AT4G20400.1">
    <molecule id="Q8GUI6-1"/>
    <property type="protein sequence ID" value="AT4G20400.1"/>
    <property type="gene ID" value="AT4G20400"/>
</dbReference>
<dbReference type="Gramene" id="AT4G20400.2">
    <molecule id="Q8GUI6-2"/>
    <property type="protein sequence ID" value="AT4G20400.2"/>
    <property type="gene ID" value="AT4G20400"/>
</dbReference>
<dbReference type="KEGG" id="ath:AT4G20400"/>
<dbReference type="Araport" id="AT4G20400"/>
<dbReference type="TAIR" id="AT4G20400">
    <property type="gene designation" value="JMJ14"/>
</dbReference>
<dbReference type="eggNOG" id="KOG1246">
    <property type="taxonomic scope" value="Eukaryota"/>
</dbReference>
<dbReference type="InParanoid" id="Q8GUI6"/>
<dbReference type="OMA" id="FEKCDIS"/>
<dbReference type="PhylomeDB" id="Q8GUI6"/>
<dbReference type="PRO" id="PR:Q8GUI6"/>
<dbReference type="Proteomes" id="UP000006548">
    <property type="component" value="Chromosome 4"/>
</dbReference>
<dbReference type="ExpressionAtlas" id="Q8GUI6">
    <property type="expression patterns" value="baseline and differential"/>
</dbReference>
<dbReference type="GO" id="GO:0005654">
    <property type="term" value="C:nucleoplasm"/>
    <property type="evidence" value="ECO:0007669"/>
    <property type="project" value="UniProtKB-SubCell"/>
</dbReference>
<dbReference type="GO" id="GO:0005634">
    <property type="term" value="C:nucleus"/>
    <property type="evidence" value="ECO:0000314"/>
    <property type="project" value="UniProtKB"/>
</dbReference>
<dbReference type="GO" id="GO:0003700">
    <property type="term" value="F:DNA-binding transcription factor activity"/>
    <property type="evidence" value="ECO:0000250"/>
    <property type="project" value="TAIR"/>
</dbReference>
<dbReference type="GO" id="GO:0032453">
    <property type="term" value="F:histone H3K4 demethylase activity"/>
    <property type="evidence" value="ECO:0000314"/>
    <property type="project" value="TAIR"/>
</dbReference>
<dbReference type="GO" id="GO:0034647">
    <property type="term" value="F:histone H3K4me/H3K4me2/H3K4me3 demethylase activity"/>
    <property type="evidence" value="ECO:0007669"/>
    <property type="project" value="RHEA"/>
</dbReference>
<dbReference type="GO" id="GO:0042054">
    <property type="term" value="F:histone methyltransferase activity"/>
    <property type="evidence" value="ECO:0000314"/>
    <property type="project" value="TAIR"/>
</dbReference>
<dbReference type="GO" id="GO:0000976">
    <property type="term" value="F:transcription cis-regulatory region binding"/>
    <property type="evidence" value="ECO:0000314"/>
    <property type="project" value="TAIR"/>
</dbReference>
<dbReference type="GO" id="GO:0008270">
    <property type="term" value="F:zinc ion binding"/>
    <property type="evidence" value="ECO:0007669"/>
    <property type="project" value="UniProtKB-KW"/>
</dbReference>
<dbReference type="GO" id="GO:0007623">
    <property type="term" value="P:circadian rhythm"/>
    <property type="evidence" value="ECO:0000315"/>
    <property type="project" value="UniProtKB"/>
</dbReference>
<dbReference type="GO" id="GO:0048589">
    <property type="term" value="P:developmental growth"/>
    <property type="evidence" value="ECO:0000315"/>
    <property type="project" value="UniProtKB"/>
</dbReference>
<dbReference type="GO" id="GO:0009908">
    <property type="term" value="P:flower development"/>
    <property type="evidence" value="ECO:0007669"/>
    <property type="project" value="UniProtKB-KW"/>
</dbReference>
<dbReference type="GO" id="GO:0062034">
    <property type="term" value="P:L-pipecolic acid biosynthetic process"/>
    <property type="evidence" value="ECO:0000315"/>
    <property type="project" value="UniProtKB"/>
</dbReference>
<dbReference type="GO" id="GO:0045892">
    <property type="term" value="P:negative regulation of DNA-templated transcription"/>
    <property type="evidence" value="ECO:0000315"/>
    <property type="project" value="UniProtKB"/>
</dbReference>
<dbReference type="GO" id="GO:0009910">
    <property type="term" value="P:negative regulation of flower development"/>
    <property type="evidence" value="ECO:0000315"/>
    <property type="project" value="TAIR"/>
</dbReference>
<dbReference type="GO" id="GO:0045814">
    <property type="term" value="P:negative regulation of gene expression, epigenetic"/>
    <property type="evidence" value="ECO:0000315"/>
    <property type="project" value="UniProtKB"/>
</dbReference>
<dbReference type="GO" id="GO:0048579">
    <property type="term" value="P:negative regulation of long-day photoperiodism, flowering"/>
    <property type="evidence" value="ECO:0000315"/>
    <property type="project" value="CACAO"/>
</dbReference>
<dbReference type="GO" id="GO:0000122">
    <property type="term" value="P:negative regulation of transcription by RNA polymerase II"/>
    <property type="evidence" value="ECO:0000314"/>
    <property type="project" value="UniProtKB"/>
</dbReference>
<dbReference type="GO" id="GO:0048573">
    <property type="term" value="P:photoperiodism, flowering"/>
    <property type="evidence" value="ECO:0000315"/>
    <property type="project" value="UniProtKB"/>
</dbReference>
<dbReference type="GO" id="GO:0099402">
    <property type="term" value="P:plant organ development"/>
    <property type="evidence" value="ECO:0000315"/>
    <property type="project" value="UniProtKB"/>
</dbReference>
<dbReference type="GO" id="GO:0009626">
    <property type="term" value="P:plant-type hypersensitive response"/>
    <property type="evidence" value="ECO:0007669"/>
    <property type="project" value="UniProtKB-KW"/>
</dbReference>
<dbReference type="GO" id="GO:1900426">
    <property type="term" value="P:positive regulation of defense response to bacterium"/>
    <property type="evidence" value="ECO:0000315"/>
    <property type="project" value="UniProtKB"/>
</dbReference>
<dbReference type="GO" id="GO:1901672">
    <property type="term" value="P:positive regulation of systemic acquired resistance"/>
    <property type="evidence" value="ECO:0000315"/>
    <property type="project" value="UniProtKB"/>
</dbReference>
<dbReference type="GO" id="GO:0006355">
    <property type="term" value="P:regulation of DNA-templated transcription"/>
    <property type="evidence" value="ECO:0000304"/>
    <property type="project" value="TAIR"/>
</dbReference>
<dbReference type="GO" id="GO:0060147">
    <property type="term" value="P:regulation of post-transcriptional gene silencing"/>
    <property type="evidence" value="ECO:0000315"/>
    <property type="project" value="UniProtKB"/>
</dbReference>
<dbReference type="GO" id="GO:2000280">
    <property type="term" value="P:regulation of root development"/>
    <property type="evidence" value="ECO:0000315"/>
    <property type="project" value="UniProtKB"/>
</dbReference>
<dbReference type="GO" id="GO:0010082">
    <property type="term" value="P:regulation of root meristem growth"/>
    <property type="evidence" value="ECO:0000315"/>
    <property type="project" value="UniProtKB"/>
</dbReference>
<dbReference type="GO" id="GO:0009627">
    <property type="term" value="P:systemic acquired resistance"/>
    <property type="evidence" value="ECO:0000315"/>
    <property type="project" value="GO_Central"/>
</dbReference>
<dbReference type="FunFam" id="3.30.160.360:FF:000005">
    <property type="entry name" value="Putative lysine-specific demethylase JMJ16"/>
    <property type="match status" value="1"/>
</dbReference>
<dbReference type="Gene3D" id="3.30.160.360">
    <property type="match status" value="1"/>
</dbReference>
<dbReference type="Gene3D" id="2.60.120.650">
    <property type="entry name" value="Cupin"/>
    <property type="match status" value="1"/>
</dbReference>
<dbReference type="InterPro" id="IPR003889">
    <property type="entry name" value="FYrich_C"/>
</dbReference>
<dbReference type="InterPro" id="IPR003888">
    <property type="entry name" value="FYrich_N"/>
</dbReference>
<dbReference type="InterPro" id="IPR003347">
    <property type="entry name" value="JmjC_dom"/>
</dbReference>
<dbReference type="InterPro" id="IPR003349">
    <property type="entry name" value="JmjN"/>
</dbReference>
<dbReference type="InterPro" id="IPR004198">
    <property type="entry name" value="Znf_C5HC2"/>
</dbReference>
<dbReference type="PANTHER" id="PTHR10694">
    <property type="entry name" value="LYSINE-SPECIFIC DEMETHYLASE"/>
    <property type="match status" value="1"/>
</dbReference>
<dbReference type="PANTHER" id="PTHR10694:SF105">
    <property type="entry name" value="LYSINE-SPECIFIC DEMETHYLASE JMJ14"/>
    <property type="match status" value="1"/>
</dbReference>
<dbReference type="Pfam" id="PF05965">
    <property type="entry name" value="FYRC"/>
    <property type="match status" value="1"/>
</dbReference>
<dbReference type="Pfam" id="PF05964">
    <property type="entry name" value="FYRN"/>
    <property type="match status" value="1"/>
</dbReference>
<dbReference type="Pfam" id="PF02373">
    <property type="entry name" value="JmjC"/>
    <property type="match status" value="1"/>
</dbReference>
<dbReference type="Pfam" id="PF02375">
    <property type="entry name" value="JmjN"/>
    <property type="match status" value="1"/>
</dbReference>
<dbReference type="Pfam" id="PF02928">
    <property type="entry name" value="zf-C5HC2"/>
    <property type="match status" value="1"/>
</dbReference>
<dbReference type="SMART" id="SM00542">
    <property type="entry name" value="FYRC"/>
    <property type="match status" value="1"/>
</dbReference>
<dbReference type="SMART" id="SM00541">
    <property type="entry name" value="FYRN"/>
    <property type="match status" value="1"/>
</dbReference>
<dbReference type="SMART" id="SM00558">
    <property type="entry name" value="JmjC"/>
    <property type="match status" value="1"/>
</dbReference>
<dbReference type="SMART" id="SM00545">
    <property type="entry name" value="JmjN"/>
    <property type="match status" value="1"/>
</dbReference>
<dbReference type="SUPFAM" id="SSF51197">
    <property type="entry name" value="Clavaminate synthase-like"/>
    <property type="match status" value="1"/>
</dbReference>
<dbReference type="PROSITE" id="PS51543">
    <property type="entry name" value="FYRC"/>
    <property type="match status" value="1"/>
</dbReference>
<dbReference type="PROSITE" id="PS51542">
    <property type="entry name" value="FYRN"/>
    <property type="match status" value="1"/>
</dbReference>
<dbReference type="PROSITE" id="PS51184">
    <property type="entry name" value="JMJC"/>
    <property type="match status" value="1"/>
</dbReference>
<dbReference type="PROSITE" id="PS51183">
    <property type="entry name" value="JMJN"/>
    <property type="match status" value="1"/>
</dbReference>
<feature type="chain" id="PRO_0000412633" description="Lysine-specific demethylase JMJ14">
    <location>
        <begin position="1"/>
        <end position="954"/>
    </location>
</feature>
<feature type="domain" description="JmjN" evidence="2">
    <location>
        <begin position="56"/>
        <end position="97"/>
    </location>
</feature>
<feature type="domain" description="JmjC" evidence="3">
    <location>
        <begin position="263"/>
        <end position="429"/>
    </location>
</feature>
<feature type="domain" description="FYR N-terminal" evidence="5">
    <location>
        <begin position="726"/>
        <end position="784"/>
    </location>
</feature>
<feature type="domain" description="FYR C-terminal" evidence="6">
    <location>
        <begin position="786"/>
        <end position="876"/>
    </location>
</feature>
<feature type="zinc finger region" description="C5HC2" evidence="1">
    <location>
        <begin position="519"/>
        <end position="571"/>
    </location>
</feature>
<feature type="region of interest" description="Disordered" evidence="7">
    <location>
        <begin position="1"/>
        <end position="46"/>
    </location>
</feature>
<feature type="region of interest" description="Disordered" evidence="7">
    <location>
        <begin position="148"/>
        <end position="170"/>
    </location>
</feature>
<feature type="region of interest" description="Disordered" evidence="7">
    <location>
        <begin position="641"/>
        <end position="670"/>
    </location>
</feature>
<feature type="region of interest" description="Disordered" evidence="7">
    <location>
        <begin position="884"/>
        <end position="905"/>
    </location>
</feature>
<feature type="short sequence motif" description="Nuclear localization signal 1" evidence="4">
    <location>
        <begin position="136"/>
        <end position="143"/>
    </location>
</feature>
<feature type="short sequence motif" description="Nuclear localization signal 2" evidence="4">
    <location>
        <begin position="470"/>
        <end position="477"/>
    </location>
</feature>
<feature type="compositionally biased region" description="Polar residues" evidence="7">
    <location>
        <begin position="29"/>
        <end position="38"/>
    </location>
</feature>
<feature type="compositionally biased region" description="Basic and acidic residues" evidence="7">
    <location>
        <begin position="645"/>
        <end position="670"/>
    </location>
</feature>
<feature type="compositionally biased region" description="Basic and acidic residues" evidence="7">
    <location>
        <begin position="885"/>
        <end position="905"/>
    </location>
</feature>
<feature type="binding site" evidence="3 17 29 30">
    <location>
        <position position="309"/>
    </location>
    <ligand>
        <name>Fe cation</name>
        <dbReference type="ChEBI" id="CHEBI:24875"/>
        <note>catalytic</note>
    </ligand>
</feature>
<feature type="binding site" evidence="3 17 29 30">
    <location>
        <position position="311"/>
    </location>
    <ligand>
        <name>Fe cation</name>
        <dbReference type="ChEBI" id="CHEBI:24875"/>
        <note>catalytic</note>
    </ligand>
</feature>
<feature type="binding site" evidence="3 17 29 30">
    <location>
        <position position="397"/>
    </location>
    <ligand>
        <name>Fe cation</name>
        <dbReference type="ChEBI" id="CHEBI:24875"/>
        <note>catalytic</note>
    </ligand>
</feature>
<feature type="binding site" evidence="17 29 30">
    <location>
        <position position="519"/>
    </location>
    <ligand>
        <name>Zn(2+)</name>
        <dbReference type="ChEBI" id="CHEBI:29105"/>
        <label>1</label>
    </ligand>
</feature>
<feature type="binding site" evidence="17 29 30">
    <location>
        <position position="522"/>
    </location>
    <ligand>
        <name>Zn(2+)</name>
        <dbReference type="ChEBI" id="CHEBI:29105"/>
        <label>1</label>
    </ligand>
</feature>
<feature type="binding site" evidence="17 29 30">
    <location>
        <position position="533"/>
    </location>
    <ligand>
        <name>Zn(2+)</name>
        <dbReference type="ChEBI" id="CHEBI:29105"/>
        <label>2</label>
    </ligand>
</feature>
<feature type="binding site" evidence="17 29 30">
    <location>
        <position position="535"/>
    </location>
    <ligand>
        <name>Zn(2+)</name>
        <dbReference type="ChEBI" id="CHEBI:29105"/>
        <label>2</label>
    </ligand>
</feature>
<feature type="binding site" evidence="17 29 30">
    <location>
        <position position="542"/>
    </location>
    <ligand>
        <name>Zn(2+)</name>
        <dbReference type="ChEBI" id="CHEBI:29105"/>
        <label>1</label>
    </ligand>
</feature>
<feature type="binding site" evidence="17 29 30">
    <location>
        <position position="545"/>
    </location>
    <ligand>
        <name>Zn(2+)</name>
        <dbReference type="ChEBI" id="CHEBI:29105"/>
        <label>1</label>
    </ligand>
</feature>
<feature type="binding site" evidence="17 30">
    <location>
        <position position="550"/>
    </location>
    <ligand>
        <name>Zn(2+)</name>
        <dbReference type="ChEBI" id="CHEBI:29105"/>
        <label>2</label>
    </ligand>
</feature>
<feature type="binding site" evidence="17 29">
    <location>
        <position position="552"/>
    </location>
    <ligand>
        <name>Zn(2+)</name>
        <dbReference type="ChEBI" id="CHEBI:29105"/>
        <label>2</label>
    </ligand>
</feature>
<feature type="site" description="Involved in histone H3A7 recognition" evidence="17 29 30">
    <location>
        <position position="171"/>
    </location>
</feature>
<feature type="site" description="Involved in histone H3R2 recognition" evidence="17 29 30">
    <location>
        <position position="285"/>
    </location>
</feature>
<feature type="site" description="Involved in histone H3K4me3 recognition" evidence="17 29 30">
    <location>
        <position position="290"/>
    </location>
</feature>
<feature type="site" description="Involved in histone H3K4me3 recognition" evidence="17 29 30">
    <location>
        <position position="298"/>
    </location>
</feature>
<feature type="site" description="Involved in histone H3Q5 recognition" evidence="17 29 30">
    <location>
        <position position="312"/>
    </location>
</feature>
<feature type="site" description="Involved in histone H3A7 recognition" evidence="17 29 30">
    <location>
        <position position="363"/>
    </location>
</feature>
<feature type="site" description="Involved in histone H3R2 recognition" evidence="17 29 30">
    <location>
        <position position="516"/>
    </location>
</feature>
<feature type="splice variant" id="VSP_041728" description="In isoform 2." evidence="26">
    <original>MDQLASLAESVAMEEDSEKQSIKGESSLEPDSTPSSPKITARWNPSEACRPLVDDAPIFYPTNE</original>
    <variation>MILLHGQ</variation>
    <location>
        <begin position="1"/>
        <end position="64"/>
    </location>
</feature>
<feature type="mutagenesis site" description="Decreased demethylation activity." evidence="17">
    <original>F</original>
    <variation>K</variation>
    <location>
        <position position="171"/>
    </location>
</feature>
<feature type="mutagenesis site" description="Decreased demethylation activity." evidence="17">
    <original>E</original>
    <variation>A</variation>
    <location>
        <position position="285"/>
    </location>
</feature>
<feature type="mutagenesis site" description="Decreased demethylation activity." evidence="17">
    <original>S</original>
    <variation>A</variation>
    <location>
        <position position="290"/>
    </location>
</feature>
<feature type="mutagenesis site" description="Decreased demethylation activity." evidence="17">
    <original>Y</original>
    <variation>A</variation>
    <location>
        <position position="298"/>
    </location>
</feature>
<feature type="mutagenesis site" description="Loss of demethylation activity." evidence="17">
    <original>H</original>
    <variation>A</variation>
    <location>
        <position position="309"/>
    </location>
</feature>
<feature type="mutagenesis site" description="Loss of demethylation activity." evidence="17">
    <original>E</original>
    <variation>A</variation>
    <location>
        <position position="311"/>
    </location>
</feature>
<feature type="mutagenesis site" description="Decreased demethylation activity." evidence="17">
    <original>D</original>
    <variation>A</variation>
    <location>
        <position position="312"/>
    </location>
</feature>
<feature type="mutagenesis site" description="Decreased demethylation activity." evidence="17">
    <original>V</original>
    <variation>A</variation>
    <location>
        <position position="363"/>
    </location>
</feature>
<feature type="mutagenesis site" description="In jmj14-3; loss of transgenic photobleaching phenotype due to RNA silencing." evidence="12">
    <original>E</original>
    <variation>K</variation>
    <location>
        <position position="387"/>
    </location>
</feature>
<feature type="mutagenesis site" description="Loss of demethylation activity." evidence="10 17">
    <original>H</original>
    <variation>A</variation>
    <location>
        <position position="397"/>
    </location>
</feature>
<feature type="mutagenesis site" description="Decreased activity." evidence="17">
    <original>E</original>
    <variation>A</variation>
    <location>
        <position position="516"/>
    </location>
</feature>
<feature type="helix" evidence="31">
    <location>
        <begin position="45"/>
        <end position="47"/>
    </location>
</feature>
<feature type="helix" evidence="31">
    <location>
        <begin position="63"/>
        <end position="66"/>
    </location>
</feature>
<feature type="helix" evidence="31">
    <location>
        <begin position="69"/>
        <end position="80"/>
    </location>
</feature>
<feature type="turn" evidence="31">
    <location>
        <begin position="81"/>
        <end position="83"/>
    </location>
</feature>
<feature type="strand" evidence="31">
    <location>
        <begin position="84"/>
        <end position="88"/>
    </location>
</feature>
<feature type="helix" evidence="31">
    <location>
        <begin position="99"/>
        <end position="101"/>
    </location>
</feature>
<feature type="helix" evidence="31">
    <location>
        <begin position="103"/>
        <end position="106"/>
    </location>
</feature>
<feature type="strand" evidence="31">
    <location>
        <begin position="114"/>
        <end position="117"/>
    </location>
</feature>
<feature type="helix" evidence="31">
    <location>
        <begin position="118"/>
        <end position="120"/>
    </location>
</feature>
<feature type="helix" evidence="31">
    <location>
        <begin position="179"/>
        <end position="194"/>
    </location>
</feature>
<feature type="helix" evidence="31">
    <location>
        <begin position="214"/>
        <end position="226"/>
    </location>
</feature>
<feature type="strand" evidence="31">
    <location>
        <begin position="233"/>
        <end position="241"/>
    </location>
</feature>
<feature type="helix" evidence="31">
    <location>
        <begin position="242"/>
        <end position="245"/>
    </location>
</feature>
<feature type="helix" evidence="31">
    <location>
        <begin position="260"/>
        <end position="266"/>
    </location>
</feature>
<feature type="helix" evidence="31">
    <location>
        <begin position="271"/>
        <end position="274"/>
    </location>
</feature>
<feature type="helix" evidence="31">
    <location>
        <begin position="281"/>
        <end position="284"/>
    </location>
</feature>
<feature type="turn" evidence="31">
    <location>
        <begin position="291"/>
        <end position="293"/>
    </location>
</feature>
<feature type="strand" evidence="31">
    <location>
        <begin position="296"/>
        <end position="300"/>
    </location>
</feature>
<feature type="strand" evidence="31">
    <location>
        <begin position="305"/>
        <end position="309"/>
    </location>
</feature>
<feature type="helix" evidence="31">
    <location>
        <begin position="312"/>
        <end position="314"/>
    </location>
</feature>
<feature type="strand" evidence="31">
    <location>
        <begin position="316"/>
        <end position="325"/>
    </location>
</feature>
<feature type="strand" evidence="31">
    <location>
        <begin position="327"/>
        <end position="331"/>
    </location>
</feature>
<feature type="helix" evidence="31">
    <location>
        <begin position="334"/>
        <end position="336"/>
    </location>
</feature>
<feature type="helix" evidence="31">
    <location>
        <begin position="337"/>
        <end position="347"/>
    </location>
</feature>
<feature type="strand" evidence="31">
    <location>
        <begin position="351"/>
        <end position="354"/>
    </location>
</feature>
<feature type="turn" evidence="31">
    <location>
        <begin position="359"/>
        <end position="361"/>
    </location>
</feature>
<feature type="helix" evidence="31">
    <location>
        <begin position="368"/>
        <end position="373"/>
    </location>
</feature>
<feature type="strand" evidence="31">
    <location>
        <begin position="379"/>
        <end position="383"/>
    </location>
</feature>
<feature type="strand" evidence="31">
    <location>
        <begin position="388"/>
        <end position="391"/>
    </location>
</feature>
<feature type="strand" evidence="31">
    <location>
        <begin position="397"/>
        <end position="412"/>
    </location>
</feature>
<feature type="helix" evidence="31">
    <location>
        <begin position="415"/>
        <end position="417"/>
    </location>
</feature>
<feature type="helix" evidence="31">
    <location>
        <begin position="418"/>
        <end position="431"/>
    </location>
</feature>
<feature type="helix" evidence="31">
    <location>
        <begin position="439"/>
        <end position="458"/>
    </location>
</feature>
<feature type="helix" evidence="31">
    <location>
        <begin position="465"/>
        <end position="471"/>
    </location>
</feature>
<feature type="strand" evidence="31">
    <location>
        <begin position="475"/>
        <end position="477"/>
    </location>
</feature>
<feature type="helix" evidence="31">
    <location>
        <begin position="479"/>
        <end position="497"/>
    </location>
</feature>
<feature type="strand" evidence="31">
    <location>
        <begin position="504"/>
        <end position="506"/>
    </location>
</feature>
<feature type="helix" evidence="32">
    <location>
        <begin position="509"/>
        <end position="511"/>
    </location>
</feature>
<feature type="strand" evidence="32">
    <location>
        <begin position="512"/>
        <end position="515"/>
    </location>
</feature>
<feature type="turn" evidence="31">
    <location>
        <begin position="520"/>
        <end position="522"/>
    </location>
</feature>
<feature type="strand" evidence="31">
    <location>
        <begin position="527"/>
        <end position="536"/>
    </location>
</feature>
<feature type="helix" evidence="31">
    <location>
        <begin position="543"/>
        <end position="545"/>
    </location>
</feature>
<feature type="turn" evidence="31">
    <location>
        <begin position="554"/>
        <end position="556"/>
    </location>
</feature>
<feature type="strand" evidence="31">
    <location>
        <begin position="557"/>
        <end position="563"/>
    </location>
</feature>
<feature type="helix" evidence="31">
    <location>
        <begin position="565"/>
        <end position="575"/>
    </location>
</feature>
<feature type="helix" evidence="31">
    <location>
        <begin position="579"/>
        <end position="586"/>
    </location>
</feature>
<gene>
    <name evidence="23" type="primary">JMJ14</name>
    <name evidence="25" type="synonym">JMJ4</name>
    <name evidence="24" type="synonym">PKDM7B</name>
    <name evidence="27" type="ordered locus">At4g20400</name>
    <name evidence="28" type="ORF">F9F13.50</name>
</gene>
<keyword id="KW-0002">3D-structure</keyword>
<keyword id="KW-0025">Alternative splicing</keyword>
<keyword id="KW-0156">Chromatin regulator</keyword>
<keyword id="KW-0223">Dioxygenase</keyword>
<keyword id="KW-0287">Flowering</keyword>
<keyword id="KW-0381">Hypersensitive response</keyword>
<keyword id="KW-0408">Iron</keyword>
<keyword id="KW-0479">Metal-binding</keyword>
<keyword id="KW-0539">Nucleus</keyword>
<keyword id="KW-0560">Oxidoreductase</keyword>
<keyword id="KW-0611">Plant defense</keyword>
<keyword id="KW-1185">Reference proteome</keyword>
<keyword id="KW-0678">Repressor</keyword>
<keyword id="KW-0804">Transcription</keyword>
<keyword id="KW-0805">Transcription regulation</keyword>
<keyword id="KW-0862">Zinc</keyword>
<keyword id="KW-0863">Zinc-finger</keyword>